<accession>P55129</accession>
<gene>
    <name type="primary">apxIA</name>
    <name type="synonym">clyIA</name>
    <name type="synonym">hlyIA</name>
</gene>
<keyword id="KW-0106">Calcium</keyword>
<keyword id="KW-0204">Cytolysis</keyword>
<keyword id="KW-0354">Hemolysis</keyword>
<keyword id="KW-1032">Host cell membrane</keyword>
<keyword id="KW-1043">Host membrane</keyword>
<keyword id="KW-0449">Lipoprotein</keyword>
<keyword id="KW-0472">Membrane</keyword>
<keyword id="KW-0564">Palmitate</keyword>
<keyword id="KW-0677">Repeat</keyword>
<keyword id="KW-0964">Secreted</keyword>
<keyword id="KW-0800">Toxin</keyword>
<keyword id="KW-0812">Transmembrane</keyword>
<keyword id="KW-1133">Transmembrane helix</keyword>
<keyword id="KW-0843">Virulence</keyword>
<evidence type="ECO:0000250" key="1"/>
<evidence type="ECO:0000255" key="2"/>
<evidence type="ECO:0000305" key="3"/>
<protein>
    <recommendedName>
        <fullName>RTX-I toxin determinant A from serotypes 5/10</fullName>
    </recommendedName>
    <alternativeName>
        <fullName>APX-IA</fullName>
    </alternativeName>
    <alternativeName>
        <fullName>Cytolysin IA</fullName>
        <shortName>CLY-IA</shortName>
    </alternativeName>
    <alternativeName>
        <fullName>Hemolysin IA</fullName>
        <shortName>HLY-IA</shortName>
    </alternativeName>
</protein>
<name>RTX12_ACTPL</name>
<reference key="1">
    <citation type="journal article" date="1993" name="Microb. Pathog.">
        <title>DNA sequence analysis of an allelic variant of the Actinobacillus pleuropneumoniae-RTX-toxin I (ApxIA) from serotype 10.</title>
        <authorList>
            <person name="Nagai S."/>
            <person name="Yagihashi T."/>
            <person name="Ishihama A."/>
        </authorList>
    </citation>
    <scope>NUCLEOTIDE SEQUENCE [GENOMIC DNA]</scope>
    <source>
        <strain>13039 / Serotype 10</strain>
    </source>
</reference>
<reference key="2">
    <citation type="journal article" date="1996" name="FEMS Microbiol. Lett.">
        <title>Identification of a locus involved in the utilization of iron by Actinobacillus pleuropneumoniae.</title>
        <authorList>
            <person name="Chin N."/>
            <person name="Frey J."/>
            <person name="Chang C.F."/>
            <person name="Chang Y.F."/>
        </authorList>
    </citation>
    <scope>NUCLEOTIDE SEQUENCE [GENOMIC DNA]</scope>
    <source>
        <strain>K17 / Serotype 5</strain>
    </source>
</reference>
<reference key="3">
    <citation type="journal article" date="1993" name="Infect. Immun.">
        <title>Structural analysis of the Actinobacillus pleuropneumoniae-RTX-toxin I (ApxI) operon.</title>
        <authorList>
            <person name="Jansen R."/>
            <person name="Briaire J."/>
            <person name="Kamp E.M."/>
            <person name="Gielkens A.L.J."/>
            <person name="Smits M.A."/>
        </authorList>
    </citation>
    <scope>NUCLEOTIDE SEQUENCE [GENOMIC DNA] OF 886-1023</scope>
    <source>
        <strain>K17 / Serotype 5</strain>
    </source>
</reference>
<proteinExistence type="inferred from homology"/>
<organism>
    <name type="scientific">Actinobacillus pleuropneumoniae</name>
    <name type="common">Haemophilus pleuropneumoniae</name>
    <dbReference type="NCBI Taxonomy" id="715"/>
    <lineage>
        <taxon>Bacteria</taxon>
        <taxon>Pseudomonadati</taxon>
        <taxon>Pseudomonadota</taxon>
        <taxon>Gammaproteobacteria</taxon>
        <taxon>Pasteurellales</taxon>
        <taxon>Pasteurellaceae</taxon>
        <taxon>Actinobacillus</taxon>
    </lineage>
</organism>
<sequence length="1023" mass="110130">MANSQLDRVKGLIDSLNQHTKSAAKSGAGALKNGLGQVKQAGQKLILYIPKDYQASTGSSLNDLVKAAEALGIEVHRSEKNGTALAKELFGTTEKLLGFSERGIALFAPQFDKLLNKNQKLSKSLGGSSEALGQRLNKTQTALSALQSFLGTAIAGMDLDSLLRRRRNGEDVSGSELAKAGVDLAAQLVDNIASATGTVDAFAEQLGKLAMPYLTLALSGLASKLNNLPDLSLAGPGFDAVSGILSVVSASFILSNKDADAGTKAAAGIEISTKILGNIGKAVSQYIIAQRVAAGLSTTAATGGLIGSVVALAISPLSFLNVADKFERAKQLEQYSERFKKFGYEGDSLLASFYRETGAIEAALTTINSVLSAASAGVGAAATGSLVGAPVAALVSAITGIISGILDASKQAIFERVATKLANKIDEWEKKHGKNYFENGYDARHSAFLEDTFELLSQYNKEYSVERVVAITQQRWDVNIGELAGITRKGADAKSGKAYVDFFEEGKLLEKDPDRFDKKVFDPLEGKIDLSSINKTTLLKFITPVFTAGEEIRERKQTGKYEYMTELFVKGKEKWVVTGVESHNAIYDYTNLIQLAIDKKGEKRQVTIESHLGEKNDRIYLSSGSSIVYAGNGHDVAYYDKTDTGYLTFDGQSAQKAGEYIVTKELKADVKVLKEVVKTQDISVGKTCSEKLEYRDYELSPFELGNGIRAKDELHSVEEIIGSNRKDKFFGSRFTDIFHGAKGDDEIYGNDGHDILYGDDGNDVIHGGDGNDHLVGGNGNDRLIGGKGNNFLNGGDGDDELQVFEGQYNVLLGGAGNDILYGSDGTNLFDGGVGNDKIYGGLGKDIYRYSKEYGRHIIIEKGGDDDTLLLSDLSFKDVGFIRIGDDLLVNKRIGGTLYYHEDYNGNALTIKDWFKEGKEGQNNKIEKIVDKDGAYVLSQYLTELTAPGRGINYFNGLEEKLYYGEGYNALPQLRKDIEQIISSTGALTGEHGQVLVGAGGPLAYSNSPNSIPNAFSNYLTQSA</sequence>
<feature type="chain" id="PRO_0000196238" description="RTX-I toxin determinant A from serotypes 5/10">
    <location>
        <begin position="1"/>
        <end position="1023"/>
    </location>
</feature>
<feature type="transmembrane region" description="Helical" evidence="2">
    <location>
        <begin position="226"/>
        <end position="256"/>
    </location>
</feature>
<feature type="transmembrane region" description="Helical" evidence="2">
    <location>
        <begin position="297"/>
        <end position="326"/>
    </location>
</feature>
<feature type="transmembrane region" description="Helical" evidence="2">
    <location>
        <begin position="367"/>
        <end position="406"/>
    </location>
</feature>
<feature type="repeat" description="Hemolysin-type calcium-binding 1">
    <location>
        <begin position="730"/>
        <end position="747"/>
    </location>
</feature>
<feature type="repeat" description="Hemolysin-type calcium-binding 2">
    <location>
        <begin position="748"/>
        <end position="765"/>
    </location>
</feature>
<feature type="repeat" description="Hemolysin-type calcium-binding 3">
    <location>
        <begin position="766"/>
        <end position="783"/>
    </location>
</feature>
<feature type="repeat" description="Hemolysin-type calcium-binding 4">
    <location>
        <begin position="784"/>
        <end position="801"/>
    </location>
</feature>
<feature type="repeat" description="Hemolysin-type calcium-binding 5">
    <location>
        <begin position="812"/>
        <end position="829"/>
    </location>
</feature>
<feature type="repeat" description="Hemolysin-type calcium-binding 6">
    <location>
        <begin position="830"/>
        <end position="847"/>
    </location>
</feature>
<feature type="sequence conflict" description="In Ref. 2; AAB17220." evidence="3" ref="2">
    <original>AMPYLTLA</original>
    <variation>GNALSNTR</variation>
    <location>
        <begin position="210"/>
        <end position="217"/>
    </location>
</feature>
<feature type="sequence conflict" description="In Ref. 2; AAB17220." evidence="3" ref="2">
    <original>E</original>
    <variation>Q</variation>
    <location>
        <position position="581"/>
    </location>
</feature>
<feature type="sequence conflict" description="In Ref. 2; AAB17220." evidence="3" ref="2">
    <original>TC</original>
    <variation>R</variation>
    <location>
        <begin position="687"/>
        <end position="688"/>
    </location>
</feature>
<feature type="sequence conflict" description="In Ref. 2; AAB17220." evidence="3" ref="2">
    <original>F</original>
    <variation>L</variation>
    <location>
        <position position="1015"/>
    </location>
</feature>
<dbReference type="EMBL" id="D16582">
    <property type="protein sequence ID" value="BAA04014.1"/>
    <property type="molecule type" value="Genomic_DNA"/>
</dbReference>
<dbReference type="EMBL" id="U04954">
    <property type="protein sequence ID" value="AAB17220.1"/>
    <property type="molecule type" value="Genomic_DNA"/>
</dbReference>
<dbReference type="EMBL" id="X73116">
    <property type="protein sequence ID" value="CAA51546.1"/>
    <property type="molecule type" value="Genomic_DNA"/>
</dbReference>
<dbReference type="PIR" id="I39641">
    <property type="entry name" value="I39641"/>
</dbReference>
<dbReference type="SMR" id="P55129"/>
<dbReference type="GO" id="GO:0005576">
    <property type="term" value="C:extracellular region"/>
    <property type="evidence" value="ECO:0007669"/>
    <property type="project" value="UniProtKB-SubCell"/>
</dbReference>
<dbReference type="GO" id="GO:0020002">
    <property type="term" value="C:host cell plasma membrane"/>
    <property type="evidence" value="ECO:0007669"/>
    <property type="project" value="UniProtKB-SubCell"/>
</dbReference>
<dbReference type="GO" id="GO:0016020">
    <property type="term" value="C:membrane"/>
    <property type="evidence" value="ECO:0007669"/>
    <property type="project" value="UniProtKB-KW"/>
</dbReference>
<dbReference type="GO" id="GO:0005509">
    <property type="term" value="F:calcium ion binding"/>
    <property type="evidence" value="ECO:0007669"/>
    <property type="project" value="InterPro"/>
</dbReference>
<dbReference type="GO" id="GO:0015267">
    <property type="term" value="F:channel activity"/>
    <property type="evidence" value="ECO:0007669"/>
    <property type="project" value="InterPro"/>
</dbReference>
<dbReference type="GO" id="GO:0090729">
    <property type="term" value="F:toxin activity"/>
    <property type="evidence" value="ECO:0007669"/>
    <property type="project" value="UniProtKB-KW"/>
</dbReference>
<dbReference type="GO" id="GO:0031640">
    <property type="term" value="P:killing of cells of another organism"/>
    <property type="evidence" value="ECO:0007669"/>
    <property type="project" value="UniProtKB-KW"/>
</dbReference>
<dbReference type="FunFam" id="2.150.10.10:FF:000006">
    <property type="entry name" value="RTX-I toxin determinant A from serotypes 5/10"/>
    <property type="match status" value="1"/>
</dbReference>
<dbReference type="Gene3D" id="2.150.10.10">
    <property type="entry name" value="Serralysin-like metalloprotease, C-terminal"/>
    <property type="match status" value="3"/>
</dbReference>
<dbReference type="InterPro" id="IPR018511">
    <property type="entry name" value="Hemolysin-typ_Ca-bd_CS"/>
</dbReference>
<dbReference type="InterPro" id="IPR001343">
    <property type="entry name" value="Hemolysn_Ca-bd"/>
</dbReference>
<dbReference type="InterPro" id="IPR013550">
    <property type="entry name" value="RTX_C"/>
</dbReference>
<dbReference type="InterPro" id="IPR018504">
    <property type="entry name" value="RTX_pore_form"/>
</dbReference>
<dbReference type="InterPro" id="IPR050557">
    <property type="entry name" value="RTX_toxin/Mannuronan_C5-epim"/>
</dbReference>
<dbReference type="InterPro" id="IPR003995">
    <property type="entry name" value="RTX_toxin_determinant-A"/>
</dbReference>
<dbReference type="InterPro" id="IPR011049">
    <property type="entry name" value="Serralysin-like_metalloprot_C"/>
</dbReference>
<dbReference type="NCBIfam" id="NF033943">
    <property type="entry name" value="RTX_toxin"/>
    <property type="match status" value="1"/>
</dbReference>
<dbReference type="PANTHER" id="PTHR38340">
    <property type="entry name" value="S-LAYER PROTEIN"/>
    <property type="match status" value="1"/>
</dbReference>
<dbReference type="PANTHER" id="PTHR38340:SF1">
    <property type="entry name" value="S-LAYER PROTEIN"/>
    <property type="match status" value="1"/>
</dbReference>
<dbReference type="Pfam" id="PF00353">
    <property type="entry name" value="HemolysinCabind"/>
    <property type="match status" value="4"/>
</dbReference>
<dbReference type="Pfam" id="PF02382">
    <property type="entry name" value="RTX"/>
    <property type="match status" value="1"/>
</dbReference>
<dbReference type="Pfam" id="PF08339">
    <property type="entry name" value="RTX_C"/>
    <property type="match status" value="1"/>
</dbReference>
<dbReference type="PRINTS" id="PR00313">
    <property type="entry name" value="CABNDNGRPT"/>
</dbReference>
<dbReference type="PRINTS" id="PR01488">
    <property type="entry name" value="RTXTOXINA"/>
</dbReference>
<dbReference type="SUPFAM" id="SSF51120">
    <property type="entry name" value="beta-Roll"/>
    <property type="match status" value="1"/>
</dbReference>
<dbReference type="PROSITE" id="PS00330">
    <property type="entry name" value="HEMOLYSIN_CALCIUM"/>
    <property type="match status" value="2"/>
</dbReference>
<comment type="function">
    <text>One of the virulence factors of A.pleuropneumoniae, which has a strong hemolytic activity and is cytotoxic for alveolar macrophages and neutrophils.</text>
</comment>
<comment type="subcellular location">
    <subcellularLocation>
        <location>Secreted</location>
    </subcellularLocation>
    <subcellularLocation>
        <location evidence="3">Host cell membrane</location>
        <topology evidence="3">Multi-pass membrane protein</topology>
    </subcellularLocation>
</comment>
<comment type="domain">
    <text>The Gly-rich region is probably involved in binding calcium, which is required for target cell-binding or cytolytic activity.</text>
</comment>
<comment type="domain">
    <text evidence="1">The three transmembrane domains are believed to be involved in pore formation by the cytotoxin.</text>
</comment>
<comment type="PTM">
    <text evidence="1">Palmitoylated by ApxIC. The toxin only becomes active when modified (By similarity).</text>
</comment>
<comment type="miscellaneous">
    <text>ApxIA is partially deleted in serotypes 2, 4, 6, 7, 8, 12, and totally deleted in serotype 3.</text>
</comment>
<comment type="miscellaneous">
    <text>The sequence shown is that of serotype 10.</text>
</comment>
<comment type="similarity">
    <text evidence="3">Belongs to the RTX prokaryotic toxin (TC 1.C.11) family.</text>
</comment>